<dbReference type="EMBL" id="AK304159">
    <property type="protein sequence ID" value="BAG65047.1"/>
    <property type="molecule type" value="mRNA"/>
</dbReference>
<dbReference type="EMBL" id="AL445590">
    <property type="status" value="NOT_ANNOTATED_CDS"/>
    <property type="molecule type" value="Genomic_DNA"/>
</dbReference>
<dbReference type="EMBL" id="BC025760">
    <property type="protein sequence ID" value="AAH25760.1"/>
    <property type="molecule type" value="mRNA"/>
</dbReference>
<dbReference type="CCDS" id="CCDS45040.1">
    <molecule id="Q8TAV4-2"/>
</dbReference>
<dbReference type="CCDS" id="CCDS9367.1">
    <molecule id="Q8TAV4-1"/>
</dbReference>
<dbReference type="RefSeq" id="NP_001137505.1">
    <molecule id="Q8TAV4-2"/>
    <property type="nucleotide sequence ID" value="NM_001144033.2"/>
</dbReference>
<dbReference type="RefSeq" id="NP_660329.1">
    <molecule id="Q8TAV4-1"/>
    <property type="nucleotide sequence ID" value="NM_145286.3"/>
</dbReference>
<dbReference type="SMR" id="Q8TAV4"/>
<dbReference type="BioGRID" id="127771">
    <property type="interactions" value="9"/>
</dbReference>
<dbReference type="FunCoup" id="Q8TAV4">
    <property type="interactions" value="39"/>
</dbReference>
<dbReference type="IntAct" id="Q8TAV4">
    <property type="interactions" value="6"/>
</dbReference>
<dbReference type="STRING" id="9606.ENSP00000368952"/>
<dbReference type="TCDB" id="8.A.21.1.3">
    <property type="family name" value="the stomatin/podocin/band 7/nephrosis,2/spfh (stomatin) family"/>
</dbReference>
<dbReference type="iPTMnet" id="Q8TAV4"/>
<dbReference type="PhosphoSitePlus" id="Q8TAV4"/>
<dbReference type="SwissPalm" id="Q8TAV4"/>
<dbReference type="BioMuta" id="STOML3"/>
<dbReference type="DMDM" id="60415939"/>
<dbReference type="jPOST" id="Q8TAV4"/>
<dbReference type="MassIVE" id="Q8TAV4"/>
<dbReference type="PaxDb" id="9606-ENSP00000368952"/>
<dbReference type="PeptideAtlas" id="Q8TAV4"/>
<dbReference type="ProteomicsDB" id="73928">
    <molecule id="Q8TAV4-1"/>
</dbReference>
<dbReference type="ProteomicsDB" id="73929">
    <molecule id="Q8TAV4-2"/>
</dbReference>
<dbReference type="Antibodypedia" id="2442">
    <property type="antibodies" value="101 antibodies from 17 providers"/>
</dbReference>
<dbReference type="DNASU" id="161003"/>
<dbReference type="Ensembl" id="ENST00000379631.9">
    <molecule id="Q8TAV4-1"/>
    <property type="protein sequence ID" value="ENSP00000368952.4"/>
    <property type="gene ID" value="ENSG00000133115.12"/>
</dbReference>
<dbReference type="Ensembl" id="ENST00000423210.1">
    <molecule id="Q8TAV4-2"/>
    <property type="protein sequence ID" value="ENSP00000401989.1"/>
    <property type="gene ID" value="ENSG00000133115.12"/>
</dbReference>
<dbReference type="GeneID" id="161003"/>
<dbReference type="KEGG" id="hsa:161003"/>
<dbReference type="MANE-Select" id="ENST00000379631.9">
    <property type="protein sequence ID" value="ENSP00000368952.4"/>
    <property type="RefSeq nucleotide sequence ID" value="NM_145286.3"/>
    <property type="RefSeq protein sequence ID" value="NP_660329.1"/>
</dbReference>
<dbReference type="UCSC" id="uc001uwx.4">
    <molecule id="Q8TAV4-1"/>
    <property type="organism name" value="human"/>
</dbReference>
<dbReference type="AGR" id="HGNC:19420"/>
<dbReference type="CTD" id="161003"/>
<dbReference type="DisGeNET" id="161003"/>
<dbReference type="GeneCards" id="STOML3"/>
<dbReference type="HGNC" id="HGNC:19420">
    <property type="gene designation" value="STOML3"/>
</dbReference>
<dbReference type="HPA" id="ENSG00000133115">
    <property type="expression patterns" value="Tissue enriched (fallopian)"/>
</dbReference>
<dbReference type="MIM" id="608327">
    <property type="type" value="gene"/>
</dbReference>
<dbReference type="neXtProt" id="NX_Q8TAV4"/>
<dbReference type="OpenTargets" id="ENSG00000133115"/>
<dbReference type="PharmGKB" id="PA134939552"/>
<dbReference type="VEuPathDB" id="HostDB:ENSG00000133115"/>
<dbReference type="eggNOG" id="KOG2621">
    <property type="taxonomic scope" value="Eukaryota"/>
</dbReference>
<dbReference type="GeneTree" id="ENSGT01030000234614"/>
<dbReference type="HOGENOM" id="CLU_024949_3_0_1"/>
<dbReference type="InParanoid" id="Q8TAV4"/>
<dbReference type="OMA" id="GRIQANK"/>
<dbReference type="OrthoDB" id="2105077at2759"/>
<dbReference type="PAN-GO" id="Q8TAV4">
    <property type="GO annotations" value="1 GO annotation based on evolutionary models"/>
</dbReference>
<dbReference type="PhylomeDB" id="Q8TAV4"/>
<dbReference type="TreeFam" id="TF105750"/>
<dbReference type="PathwayCommons" id="Q8TAV4"/>
<dbReference type="Reactome" id="R-HSA-2672351">
    <property type="pathway name" value="Stimuli-sensing channels"/>
</dbReference>
<dbReference type="SignaLink" id="Q8TAV4"/>
<dbReference type="BioGRID-ORCS" id="161003">
    <property type="hits" value="12 hits in 1161 CRISPR screens"/>
</dbReference>
<dbReference type="ChiTaRS" id="STOML3">
    <property type="organism name" value="human"/>
</dbReference>
<dbReference type="GenomeRNAi" id="161003"/>
<dbReference type="Pharos" id="Q8TAV4">
    <property type="development level" value="Tbio"/>
</dbReference>
<dbReference type="PRO" id="PR:Q8TAV4"/>
<dbReference type="Proteomes" id="UP000005640">
    <property type="component" value="Chromosome 13"/>
</dbReference>
<dbReference type="RNAct" id="Q8TAV4">
    <property type="molecule type" value="protein"/>
</dbReference>
<dbReference type="Bgee" id="ENSG00000133115">
    <property type="expression patterns" value="Expressed in male germ line stem cell (sensu Vertebrata) in testis and 41 other cell types or tissues"/>
</dbReference>
<dbReference type="GO" id="GO:0005929">
    <property type="term" value="C:cilium"/>
    <property type="evidence" value="ECO:0007669"/>
    <property type="project" value="Ensembl"/>
</dbReference>
<dbReference type="GO" id="GO:0045121">
    <property type="term" value="C:membrane raft"/>
    <property type="evidence" value="ECO:0007669"/>
    <property type="project" value="Ensembl"/>
</dbReference>
<dbReference type="GO" id="GO:0043005">
    <property type="term" value="C:neuron projection"/>
    <property type="evidence" value="ECO:0007669"/>
    <property type="project" value="Ensembl"/>
</dbReference>
<dbReference type="GO" id="GO:0005886">
    <property type="term" value="C:plasma membrane"/>
    <property type="evidence" value="ECO:0000318"/>
    <property type="project" value="GO_Central"/>
</dbReference>
<dbReference type="GO" id="GO:0007165">
    <property type="term" value="P:signal transduction"/>
    <property type="evidence" value="ECO:0007669"/>
    <property type="project" value="Ensembl"/>
</dbReference>
<dbReference type="FunFam" id="3.30.479.30:FF:000002">
    <property type="entry name" value="band 7 protein AGAP004871"/>
    <property type="match status" value="1"/>
</dbReference>
<dbReference type="Gene3D" id="6.10.250.2090">
    <property type="match status" value="1"/>
</dbReference>
<dbReference type="Gene3D" id="3.30.479.30">
    <property type="entry name" value="Band 7 domain"/>
    <property type="match status" value="1"/>
</dbReference>
<dbReference type="InterPro" id="IPR043202">
    <property type="entry name" value="Band-7_stomatin-like"/>
</dbReference>
<dbReference type="InterPro" id="IPR001107">
    <property type="entry name" value="Band_7"/>
</dbReference>
<dbReference type="InterPro" id="IPR036013">
    <property type="entry name" value="Band_7/SPFH_dom_sf"/>
</dbReference>
<dbReference type="InterPro" id="IPR018080">
    <property type="entry name" value="Band_7/stomatin-like_CS"/>
</dbReference>
<dbReference type="InterPro" id="IPR001972">
    <property type="entry name" value="Stomatin_HflK_fam"/>
</dbReference>
<dbReference type="PANTHER" id="PTHR10264">
    <property type="entry name" value="BAND 7 PROTEIN-RELATED"/>
    <property type="match status" value="1"/>
</dbReference>
<dbReference type="PANTHER" id="PTHR10264:SF49">
    <property type="entry name" value="STOMATIN-LIKE PROTEIN 3"/>
    <property type="match status" value="1"/>
</dbReference>
<dbReference type="Pfam" id="PF01145">
    <property type="entry name" value="Band_7"/>
    <property type="match status" value="1"/>
</dbReference>
<dbReference type="PRINTS" id="PR00721">
    <property type="entry name" value="STOMATIN"/>
</dbReference>
<dbReference type="SMART" id="SM00244">
    <property type="entry name" value="PHB"/>
    <property type="match status" value="1"/>
</dbReference>
<dbReference type="SUPFAM" id="SSF117892">
    <property type="entry name" value="Band 7/SPFH domain"/>
    <property type="match status" value="1"/>
</dbReference>
<dbReference type="PROSITE" id="PS01270">
    <property type="entry name" value="BAND_7"/>
    <property type="match status" value="1"/>
</dbReference>
<accession>Q8TAV4</accession>
<accession>B4E285</accession>
<accession>Q5JS35</accession>
<gene>
    <name type="primary">STOML3</name>
</gene>
<proteinExistence type="evidence at protein level"/>
<keyword id="KW-0025">Alternative splicing</keyword>
<keyword id="KW-1003">Cell membrane</keyword>
<keyword id="KW-0472">Membrane</keyword>
<keyword id="KW-0597">Phosphoprotein</keyword>
<keyword id="KW-1267">Proteomics identification</keyword>
<keyword id="KW-1185">Reference proteome</keyword>
<keyword id="KW-0735">Signal-anchor</keyword>
<keyword id="KW-0812">Transmembrane</keyword>
<keyword id="KW-1133">Transmembrane helix</keyword>
<evidence type="ECO:0000250" key="1">
    <source>
        <dbReference type="UniProtKB" id="P27105"/>
    </source>
</evidence>
<evidence type="ECO:0000250" key="2">
    <source>
        <dbReference type="UniProtKB" id="Q6PE84"/>
    </source>
</evidence>
<evidence type="ECO:0000255" key="3"/>
<evidence type="ECO:0000303" key="4">
    <source>
    </source>
</evidence>
<evidence type="ECO:0000305" key="5"/>
<name>STML3_HUMAN</name>
<feature type="chain" id="PRO_0000094033" description="Stomatin-like protein 3">
    <location>
        <begin position="1"/>
        <end position="291"/>
    </location>
</feature>
<feature type="transmembrane region" description="Helical; Signal-anchor for type III membrane protein" evidence="3">
    <location>
        <begin position="29"/>
        <end position="49"/>
    </location>
</feature>
<feature type="topological domain" description="Cytoplasmic" evidence="3">
    <location>
        <begin position="50"/>
        <end position="291"/>
    </location>
</feature>
<feature type="modified residue" description="Phosphoserine" evidence="1">
    <location>
        <position position="7"/>
    </location>
</feature>
<feature type="modified residue" description="Phosphoserine" evidence="1">
    <location>
        <position position="241"/>
    </location>
</feature>
<feature type="splice variant" id="VSP_042937" description="In isoform 2." evidence="4">
    <original>MDSRVSSPEKQDKENF</original>
    <variation>MNSRGEL</variation>
    <location>
        <begin position="1"/>
        <end position="16"/>
    </location>
</feature>
<reference key="1">
    <citation type="journal article" date="2004" name="Nat. Genet.">
        <title>Complete sequencing and characterization of 21,243 full-length human cDNAs.</title>
        <authorList>
            <person name="Ota T."/>
            <person name="Suzuki Y."/>
            <person name="Nishikawa T."/>
            <person name="Otsuki T."/>
            <person name="Sugiyama T."/>
            <person name="Irie R."/>
            <person name="Wakamatsu A."/>
            <person name="Hayashi K."/>
            <person name="Sato H."/>
            <person name="Nagai K."/>
            <person name="Kimura K."/>
            <person name="Makita H."/>
            <person name="Sekine M."/>
            <person name="Obayashi M."/>
            <person name="Nishi T."/>
            <person name="Shibahara T."/>
            <person name="Tanaka T."/>
            <person name="Ishii S."/>
            <person name="Yamamoto J."/>
            <person name="Saito K."/>
            <person name="Kawai Y."/>
            <person name="Isono Y."/>
            <person name="Nakamura Y."/>
            <person name="Nagahari K."/>
            <person name="Murakami K."/>
            <person name="Yasuda T."/>
            <person name="Iwayanagi T."/>
            <person name="Wagatsuma M."/>
            <person name="Shiratori A."/>
            <person name="Sudo H."/>
            <person name="Hosoiri T."/>
            <person name="Kaku Y."/>
            <person name="Kodaira H."/>
            <person name="Kondo H."/>
            <person name="Sugawara M."/>
            <person name="Takahashi M."/>
            <person name="Kanda K."/>
            <person name="Yokoi T."/>
            <person name="Furuya T."/>
            <person name="Kikkawa E."/>
            <person name="Omura Y."/>
            <person name="Abe K."/>
            <person name="Kamihara K."/>
            <person name="Katsuta N."/>
            <person name="Sato K."/>
            <person name="Tanikawa M."/>
            <person name="Yamazaki M."/>
            <person name="Ninomiya K."/>
            <person name="Ishibashi T."/>
            <person name="Yamashita H."/>
            <person name="Murakawa K."/>
            <person name="Fujimori K."/>
            <person name="Tanai H."/>
            <person name="Kimata M."/>
            <person name="Watanabe M."/>
            <person name="Hiraoka S."/>
            <person name="Chiba Y."/>
            <person name="Ishida S."/>
            <person name="Ono Y."/>
            <person name="Takiguchi S."/>
            <person name="Watanabe S."/>
            <person name="Yosida M."/>
            <person name="Hotuta T."/>
            <person name="Kusano J."/>
            <person name="Kanehori K."/>
            <person name="Takahashi-Fujii A."/>
            <person name="Hara H."/>
            <person name="Tanase T.-O."/>
            <person name="Nomura Y."/>
            <person name="Togiya S."/>
            <person name="Komai F."/>
            <person name="Hara R."/>
            <person name="Takeuchi K."/>
            <person name="Arita M."/>
            <person name="Imose N."/>
            <person name="Musashino K."/>
            <person name="Yuuki H."/>
            <person name="Oshima A."/>
            <person name="Sasaki N."/>
            <person name="Aotsuka S."/>
            <person name="Yoshikawa Y."/>
            <person name="Matsunawa H."/>
            <person name="Ichihara T."/>
            <person name="Shiohata N."/>
            <person name="Sano S."/>
            <person name="Moriya S."/>
            <person name="Momiyama H."/>
            <person name="Satoh N."/>
            <person name="Takami S."/>
            <person name="Terashima Y."/>
            <person name="Suzuki O."/>
            <person name="Nakagawa S."/>
            <person name="Senoh A."/>
            <person name="Mizoguchi H."/>
            <person name="Goto Y."/>
            <person name="Shimizu F."/>
            <person name="Wakebe H."/>
            <person name="Hishigaki H."/>
            <person name="Watanabe T."/>
            <person name="Sugiyama A."/>
            <person name="Takemoto M."/>
            <person name="Kawakami B."/>
            <person name="Yamazaki M."/>
            <person name="Watanabe K."/>
            <person name="Kumagai A."/>
            <person name="Itakura S."/>
            <person name="Fukuzumi Y."/>
            <person name="Fujimori Y."/>
            <person name="Komiyama M."/>
            <person name="Tashiro H."/>
            <person name="Tanigami A."/>
            <person name="Fujiwara T."/>
            <person name="Ono T."/>
            <person name="Yamada K."/>
            <person name="Fujii Y."/>
            <person name="Ozaki K."/>
            <person name="Hirao M."/>
            <person name="Ohmori Y."/>
            <person name="Kawabata A."/>
            <person name="Hikiji T."/>
            <person name="Kobatake N."/>
            <person name="Inagaki H."/>
            <person name="Ikema Y."/>
            <person name="Okamoto S."/>
            <person name="Okitani R."/>
            <person name="Kawakami T."/>
            <person name="Noguchi S."/>
            <person name="Itoh T."/>
            <person name="Shigeta K."/>
            <person name="Senba T."/>
            <person name="Matsumura K."/>
            <person name="Nakajima Y."/>
            <person name="Mizuno T."/>
            <person name="Morinaga M."/>
            <person name="Sasaki M."/>
            <person name="Togashi T."/>
            <person name="Oyama M."/>
            <person name="Hata H."/>
            <person name="Watanabe M."/>
            <person name="Komatsu T."/>
            <person name="Mizushima-Sugano J."/>
            <person name="Satoh T."/>
            <person name="Shirai Y."/>
            <person name="Takahashi Y."/>
            <person name="Nakagawa K."/>
            <person name="Okumura K."/>
            <person name="Nagase T."/>
            <person name="Nomura N."/>
            <person name="Kikuchi H."/>
            <person name="Masuho Y."/>
            <person name="Yamashita R."/>
            <person name="Nakai K."/>
            <person name="Yada T."/>
            <person name="Nakamura Y."/>
            <person name="Ohara O."/>
            <person name="Isogai T."/>
            <person name="Sugano S."/>
        </authorList>
    </citation>
    <scope>NUCLEOTIDE SEQUENCE [LARGE SCALE MRNA] (ISOFORM 2)</scope>
    <source>
        <tissue>Trachea</tissue>
    </source>
</reference>
<reference key="2">
    <citation type="journal article" date="2004" name="Nature">
        <title>The DNA sequence and analysis of human chromosome 13.</title>
        <authorList>
            <person name="Dunham A."/>
            <person name="Matthews L.H."/>
            <person name="Burton J."/>
            <person name="Ashurst J.L."/>
            <person name="Howe K.L."/>
            <person name="Ashcroft K.J."/>
            <person name="Beare D.M."/>
            <person name="Burford D.C."/>
            <person name="Hunt S.E."/>
            <person name="Griffiths-Jones S."/>
            <person name="Jones M.C."/>
            <person name="Keenan S.J."/>
            <person name="Oliver K."/>
            <person name="Scott C.E."/>
            <person name="Ainscough R."/>
            <person name="Almeida J.P."/>
            <person name="Ambrose K.D."/>
            <person name="Andrews D.T."/>
            <person name="Ashwell R.I.S."/>
            <person name="Babbage A.K."/>
            <person name="Bagguley C.L."/>
            <person name="Bailey J."/>
            <person name="Bannerjee R."/>
            <person name="Barlow K.F."/>
            <person name="Bates K."/>
            <person name="Beasley H."/>
            <person name="Bird C.P."/>
            <person name="Bray-Allen S."/>
            <person name="Brown A.J."/>
            <person name="Brown J.Y."/>
            <person name="Burrill W."/>
            <person name="Carder C."/>
            <person name="Carter N.P."/>
            <person name="Chapman J.C."/>
            <person name="Clamp M.E."/>
            <person name="Clark S.Y."/>
            <person name="Clarke G."/>
            <person name="Clee C.M."/>
            <person name="Clegg S.C."/>
            <person name="Cobley V."/>
            <person name="Collins J.E."/>
            <person name="Corby N."/>
            <person name="Coville G.J."/>
            <person name="Deloukas P."/>
            <person name="Dhami P."/>
            <person name="Dunham I."/>
            <person name="Dunn M."/>
            <person name="Earthrowl M.E."/>
            <person name="Ellington A.G."/>
            <person name="Faulkner L."/>
            <person name="Frankish A.G."/>
            <person name="Frankland J."/>
            <person name="French L."/>
            <person name="Garner P."/>
            <person name="Garnett J."/>
            <person name="Gilbert J.G.R."/>
            <person name="Gilson C.J."/>
            <person name="Ghori J."/>
            <person name="Grafham D.V."/>
            <person name="Gribble S.M."/>
            <person name="Griffiths C."/>
            <person name="Hall R.E."/>
            <person name="Hammond S."/>
            <person name="Harley J.L."/>
            <person name="Hart E.A."/>
            <person name="Heath P.D."/>
            <person name="Howden P.J."/>
            <person name="Huckle E.J."/>
            <person name="Hunt P.J."/>
            <person name="Hunt A.R."/>
            <person name="Johnson C."/>
            <person name="Johnson D."/>
            <person name="Kay M."/>
            <person name="Kimberley A.M."/>
            <person name="King A."/>
            <person name="Laird G.K."/>
            <person name="Langford C.J."/>
            <person name="Lawlor S."/>
            <person name="Leongamornlert D.A."/>
            <person name="Lloyd D.M."/>
            <person name="Lloyd C."/>
            <person name="Loveland J.E."/>
            <person name="Lovell J."/>
            <person name="Martin S."/>
            <person name="Mashreghi-Mohammadi M."/>
            <person name="McLaren S.J."/>
            <person name="McMurray A."/>
            <person name="Milne S."/>
            <person name="Moore M.J.F."/>
            <person name="Nickerson T."/>
            <person name="Palmer S.A."/>
            <person name="Pearce A.V."/>
            <person name="Peck A.I."/>
            <person name="Pelan S."/>
            <person name="Phillimore B."/>
            <person name="Porter K.M."/>
            <person name="Rice C.M."/>
            <person name="Searle S."/>
            <person name="Sehra H.K."/>
            <person name="Shownkeen R."/>
            <person name="Skuce C.D."/>
            <person name="Smith M."/>
            <person name="Steward C.A."/>
            <person name="Sycamore N."/>
            <person name="Tester J."/>
            <person name="Thomas D.W."/>
            <person name="Tracey A."/>
            <person name="Tromans A."/>
            <person name="Tubby B."/>
            <person name="Wall M."/>
            <person name="Wallis J.M."/>
            <person name="West A.P."/>
            <person name="Whitehead S.L."/>
            <person name="Willey D.L."/>
            <person name="Wilming L."/>
            <person name="Wray P.W."/>
            <person name="Wright M.W."/>
            <person name="Young L."/>
            <person name="Coulson A."/>
            <person name="Durbin R.M."/>
            <person name="Hubbard T."/>
            <person name="Sulston J.E."/>
            <person name="Beck S."/>
            <person name="Bentley D.R."/>
            <person name="Rogers J."/>
            <person name="Ross M.T."/>
        </authorList>
    </citation>
    <scope>NUCLEOTIDE SEQUENCE [LARGE SCALE GENOMIC DNA]</scope>
</reference>
<reference key="3">
    <citation type="journal article" date="2004" name="Genome Res.">
        <title>The status, quality, and expansion of the NIH full-length cDNA project: the Mammalian Gene Collection (MGC).</title>
        <authorList>
            <consortium name="The MGC Project Team"/>
        </authorList>
    </citation>
    <scope>NUCLEOTIDE SEQUENCE [LARGE SCALE MRNA] (ISOFORM 1)</scope>
    <source>
        <tissue>Lung</tissue>
    </source>
</reference>
<sequence length="291" mass="32135">MDSRVSSPEKQDKENFVGVNNKRLGVCGWILFSLSFLLVIITFPISIWMCLKIIKEYERAVVFRLGRIQADKAKGPGLILVLPCIDVFVKVDLRTVTCNIPPQEILTRDSVTTQVDGVVYYRIYSAVSAVANVNDVHQATFLLAQTTLRNVLGTQTLSQILAGREEIAHSIQTLLDDATELWGIRVARVEIKDVRIPVQLQRSMAAEAEATREARAKVLAAEGEMNASKSLKSASMVLAESPIALQLRYLQTLSTVATEKNSTIVFPLPMNILEGIGGVSYDNHKKLPNKA</sequence>
<organism>
    <name type="scientific">Homo sapiens</name>
    <name type="common">Human</name>
    <dbReference type="NCBI Taxonomy" id="9606"/>
    <lineage>
        <taxon>Eukaryota</taxon>
        <taxon>Metazoa</taxon>
        <taxon>Chordata</taxon>
        <taxon>Craniata</taxon>
        <taxon>Vertebrata</taxon>
        <taxon>Euteleostomi</taxon>
        <taxon>Mammalia</taxon>
        <taxon>Eutheria</taxon>
        <taxon>Euarchontoglires</taxon>
        <taxon>Primates</taxon>
        <taxon>Haplorrhini</taxon>
        <taxon>Catarrhini</taxon>
        <taxon>Hominidae</taxon>
        <taxon>Homo</taxon>
    </lineage>
</organism>
<comment type="function">
    <text evidence="2">Required for the function of many mechanoreceptors. Modulate mechanotransduction channels and acid-sensing ion channels (ASIC) proteins. Potentiates PIEZO1 and PIEZO2 function by increasing their sensitivity to mechanical stimulations.</text>
</comment>
<comment type="subunit">
    <text evidence="2">Homodimer. Interacts with PIEZO1 and PIEZO2.</text>
</comment>
<comment type="interaction">
    <interactant intactId="EBI-12900395">
        <id>Q8TAV4</id>
    </interactant>
    <interactant intactId="EBI-10225815">
        <id>Q08AM2</id>
        <label>ADAM33</label>
    </interactant>
    <organismsDiffer>false</organismsDiffer>
    <experiments>3</experiments>
</comment>
<comment type="interaction">
    <interactant intactId="EBI-12900395">
        <id>Q8TAV4</id>
    </interactant>
    <interactant intactId="EBI-12256978">
        <id>Q8N6F1-2</id>
        <label>CLDN19</label>
    </interactant>
    <organismsDiffer>false</organismsDiffer>
    <experiments>3</experiments>
</comment>
<comment type="interaction">
    <interactant intactId="EBI-12900395">
        <id>Q8TAV4</id>
    </interactant>
    <interactant intactId="EBI-10266796">
        <id>Q8N5M9</id>
        <label>JAGN1</label>
    </interactant>
    <organismsDiffer>false</organismsDiffer>
    <experiments>3</experiments>
</comment>
<comment type="interaction">
    <interactant intactId="EBI-12900395">
        <id>Q8TAV4</id>
    </interactant>
    <interactant intactId="EBI-8652744">
        <id>Q96IW7</id>
        <label>SEC22A</label>
    </interactant>
    <organismsDiffer>false</organismsDiffer>
    <experiments>3</experiments>
</comment>
<comment type="interaction">
    <interactant intactId="EBI-12900395">
        <id>Q8TAV4</id>
    </interactant>
    <interactant intactId="EBI-10179682">
        <id>O00526</id>
        <label>UPK2</label>
    </interactant>
    <organismsDiffer>false</organismsDiffer>
    <experiments>3</experiments>
</comment>
<comment type="interaction">
    <interactant intactId="EBI-12900395">
        <id>Q8TAV4</id>
    </interactant>
    <interactant intactId="EBI-10254561">
        <id>Q6UX98</id>
        <label>ZDHHC24</label>
    </interactant>
    <organismsDiffer>false</organismsDiffer>
    <experiments>3</experiments>
</comment>
<comment type="subcellular location">
    <subcellularLocation>
        <location evidence="2">Cell membrane</location>
        <topology evidence="2">Single-pass type III membrane protein</topology>
    </subcellularLocation>
    <text evidence="2">Detected in lipid rafts.</text>
</comment>
<comment type="alternative products">
    <event type="alternative splicing"/>
    <isoform>
        <id>Q8TAV4-1</id>
        <name>1</name>
        <sequence type="displayed"/>
    </isoform>
    <isoform>
        <id>Q8TAV4-2</id>
        <name>2</name>
        <sequence type="described" ref="VSP_042937"/>
    </isoform>
</comment>
<comment type="similarity">
    <text evidence="5">Belongs to the band 7/mec-2 family.</text>
</comment>
<protein>
    <recommendedName>
        <fullName>Stomatin-like protein 3</fullName>
        <shortName>SLP-3</shortName>
    </recommendedName>
</protein>